<name>SECG_THEKO</name>
<feature type="chain" id="PRO_0000157277" description="Preprotein translocase subunit SecG">
    <location>
        <begin position="1"/>
        <end position="56"/>
    </location>
</feature>
<feature type="topological domain" description="Cytoplasmic" evidence="1">
    <location>
        <begin position="1"/>
        <end position="29"/>
    </location>
</feature>
<feature type="transmembrane region" description="Helical" evidence="1">
    <location>
        <begin position="30"/>
        <end position="49"/>
    </location>
</feature>
<feature type="topological domain" description="Extracellular" evidence="1">
    <location>
        <begin position="50"/>
        <end position="56"/>
    </location>
</feature>
<reference key="1">
    <citation type="journal article" date="2005" name="Genome Res.">
        <title>Complete genome sequence of the hyperthermophilic archaeon Thermococcus kodakaraensis KOD1 and comparison with Pyrococcus genomes.</title>
        <authorList>
            <person name="Fukui T."/>
            <person name="Atomi H."/>
            <person name="Kanai T."/>
            <person name="Matsumi R."/>
            <person name="Fujiwara S."/>
            <person name="Imanaka T."/>
        </authorList>
    </citation>
    <scope>NUCLEOTIDE SEQUENCE [LARGE SCALE GENOMIC DNA]</scope>
    <source>
        <strain>ATCC BAA-918 / JCM 12380 / KOD1</strain>
    </source>
</reference>
<sequence length="56" mass="6085">MAKEKATLPPTGAGLMRFFDEDTRAVKVSPKGVIALTLLLIAFEFILHMFGSSIFG</sequence>
<gene>
    <name evidence="1" type="primary">secG</name>
    <name type="ordered locus">TK1952</name>
</gene>
<organism>
    <name type="scientific">Thermococcus kodakarensis (strain ATCC BAA-918 / JCM 12380 / KOD1)</name>
    <name type="common">Pyrococcus kodakaraensis (strain KOD1)</name>
    <dbReference type="NCBI Taxonomy" id="69014"/>
    <lineage>
        <taxon>Archaea</taxon>
        <taxon>Methanobacteriati</taxon>
        <taxon>Methanobacteriota</taxon>
        <taxon>Thermococci</taxon>
        <taxon>Thermococcales</taxon>
        <taxon>Thermococcaceae</taxon>
        <taxon>Thermococcus</taxon>
    </lineage>
</organism>
<protein>
    <recommendedName>
        <fullName evidence="1">Preprotein translocase subunit SecG</fullName>
    </recommendedName>
    <alternativeName>
        <fullName evidence="1">Protein transport protein Sec61 subunit beta homolog</fullName>
    </alternativeName>
</protein>
<dbReference type="EMBL" id="AP006878">
    <property type="protein sequence ID" value="BAD86141.1"/>
    <property type="molecule type" value="Genomic_DNA"/>
</dbReference>
<dbReference type="RefSeq" id="WP_011250902.1">
    <property type="nucleotide sequence ID" value="NC_006624.1"/>
</dbReference>
<dbReference type="SMR" id="Q5JDK7"/>
<dbReference type="EnsemblBacteria" id="BAD86141">
    <property type="protein sequence ID" value="BAD86141"/>
    <property type="gene ID" value="TK1952"/>
</dbReference>
<dbReference type="GeneID" id="78448483"/>
<dbReference type="KEGG" id="tko:TK1952"/>
<dbReference type="PATRIC" id="fig|69014.16.peg.1906"/>
<dbReference type="eggNOG" id="arCOG02957">
    <property type="taxonomic scope" value="Archaea"/>
</dbReference>
<dbReference type="HOGENOM" id="CLU_208205_3_1_2"/>
<dbReference type="InParanoid" id="Q5JDK7"/>
<dbReference type="OrthoDB" id="43651at2157"/>
<dbReference type="PhylomeDB" id="Q5JDK7"/>
<dbReference type="Proteomes" id="UP000000536">
    <property type="component" value="Chromosome"/>
</dbReference>
<dbReference type="GO" id="GO:0005886">
    <property type="term" value="C:plasma membrane"/>
    <property type="evidence" value="ECO:0007669"/>
    <property type="project" value="UniProtKB-SubCell"/>
</dbReference>
<dbReference type="GO" id="GO:0015031">
    <property type="term" value="P:protein transport"/>
    <property type="evidence" value="ECO:0007669"/>
    <property type="project" value="UniProtKB-UniRule"/>
</dbReference>
<dbReference type="HAMAP" id="MF_00751">
    <property type="entry name" value="SecG"/>
    <property type="match status" value="1"/>
</dbReference>
<dbReference type="InterPro" id="IPR023531">
    <property type="entry name" value="Preprot_translocase_SecG"/>
</dbReference>
<dbReference type="InterPro" id="IPR016482">
    <property type="entry name" value="SecG/Sec61-beta/Sbh"/>
</dbReference>
<dbReference type="NCBIfam" id="NF002318">
    <property type="entry name" value="PRK01253.1"/>
    <property type="match status" value="1"/>
</dbReference>
<dbReference type="Pfam" id="PF03911">
    <property type="entry name" value="Sec61_beta"/>
    <property type="match status" value="1"/>
</dbReference>
<keyword id="KW-1003">Cell membrane</keyword>
<keyword id="KW-0472">Membrane</keyword>
<keyword id="KW-0653">Protein transport</keyword>
<keyword id="KW-1185">Reference proteome</keyword>
<keyword id="KW-0811">Translocation</keyword>
<keyword id="KW-0812">Transmembrane</keyword>
<keyword id="KW-1133">Transmembrane helix</keyword>
<keyword id="KW-0813">Transport</keyword>
<accession>Q5JDK7</accession>
<proteinExistence type="inferred from homology"/>
<evidence type="ECO:0000255" key="1">
    <source>
        <dbReference type="HAMAP-Rule" id="MF_00751"/>
    </source>
</evidence>
<comment type="function">
    <text evidence="1">Involved in protein export. The function of the beta subunit is unknown, but it may be involved in stabilization of the trimeric complex.</text>
</comment>
<comment type="subunit">
    <text evidence="1">Component of the protein translocase complex. Heterotrimer consisting of alpha (SecY), beta (SecG) and gamma (SecE) subunits. Can form oligomers of the heterotrimer.</text>
</comment>
<comment type="subcellular location">
    <subcellularLocation>
        <location evidence="1">Cell membrane</location>
        <topology evidence="1">Single-pass membrane protein</topology>
    </subcellularLocation>
</comment>
<comment type="similarity">
    <text evidence="1">Belongs to the SEC61-beta family.</text>
</comment>